<name>HEPH_MOUSE</name>
<sequence>MKAGHLLWALLLMHSLWSIPTDGAIRNYYLGIQDMQWNYAPKGRNVITNQTLNNDTVASSFLKSGKNRIGSSYKKTVYKEYSDGTYTEEIAKPAWLGFLGPLLQAEVGDVILIHLKNFASRPYTIHPHGVFYEKDSEGSLYPDGSSGYLKADDSVPPGGSHVYNWSIPESHAPTEADPACLTWIYHSHVDAPRDIATGLIGPLITCKRGTLDGNSPPQRKDVDHNFFLLFSVIDENLSWHLDDNIATYCSDPASVDKEDGAFQDSNRMHAINGFVFGNLPELSMCAQKHVAWHLFGMGNEIDVHTAFFHGQMLSIRGHHTDVANIFPATFVTAEMVPQKSGTWLISCEVNSHLRSGMQAFYKVDSCSMDPPVDQLTGKVRQYFIQAHEIQWDYGPIGYDGRTGKSLREPGSGPDKYFQKSSSRIGGTYWKVRYEAFQDETFQERVHQEEETHLGILGPVIRAEVGDTIQVVFYNRASQPFSIQPHGVFYEKNSEGTVYNDGTSHPKVAKSFEKVTYYWTVPPHAGPTAQDPACLTWMYFSAADPTRDTNSGLVGPLLVCKAGALGADGKQKGVDKEFFLLFTVFDENESWYNNANQAAGMLDSRLLSEDVEGFQDSNRMHAINGFLFSNLPRLDMCKGDTVAWHLLGLGTETDVHGVMFEGNTVQLQGMRKGAVMLFPHTFVTAIMQPDNPGIFEIYCQAGSHREEGMQAIYNVSQCSSHQDSPRQHYQASRVYYIMAEEIEWDYCPDRSWELEWHNTSEKDSYGHVFLSNKDGLLGSKYKKAVFREYTDGTFRIPRPRSGPEEHLGILGPLIRGEVGDILTVVFKNKASRPYSIHAHGVLESNTGGPQAAEPGEVLTYQWNIPERSGPGPSDSACVSWIYYSAVDPIKDMYSGLVGPLVICRNGILEPNGGRNDMDREFALLFLIFDENQSWYLKENIATYGPQESSHVNLKDATFLESNKMHAINGKLYANLRGLTVYQGERVAWYMLAMGQDTDIHTVHFHAESFLYQNGQSYRADVVDLFPGTFEVVEMVASNPGTWLMHCHVTDHVHAGMETIFTVLSHEEHFSTMTTITKEIGKAVILRDIGGDNVKMLGMNIPIKDVEILSSALIAICVLLLLIALALGGVVWYQHRQRKLRRNRRSILDDSFKLLSLKQ</sequence>
<keyword id="KW-0025">Alternative splicing</keyword>
<keyword id="KW-0106">Calcium</keyword>
<keyword id="KW-1003">Cell membrane</keyword>
<keyword id="KW-1015">Disulfide bond</keyword>
<keyword id="KW-0325">Glycoprotein</keyword>
<keyword id="KW-0406">Ion transport</keyword>
<keyword id="KW-0408">Iron</keyword>
<keyword id="KW-0410">Iron transport</keyword>
<keyword id="KW-0472">Membrane</keyword>
<keyword id="KW-0479">Metal-binding</keyword>
<keyword id="KW-0560">Oxidoreductase</keyword>
<keyword id="KW-0597">Phosphoprotein</keyword>
<keyword id="KW-1185">Reference proteome</keyword>
<keyword id="KW-0677">Repeat</keyword>
<keyword id="KW-0732">Signal</keyword>
<keyword id="KW-0915">Sodium</keyword>
<keyword id="KW-0812">Transmembrane</keyword>
<keyword id="KW-1133">Transmembrane helix</keyword>
<keyword id="KW-0813">Transport</keyword>
<evidence type="ECO:0000250" key="1">
    <source>
        <dbReference type="UniProtKB" id="P00450"/>
    </source>
</evidence>
<evidence type="ECO:0000250" key="2">
    <source>
        <dbReference type="UniProtKB" id="Q9BQS7"/>
    </source>
</evidence>
<evidence type="ECO:0000255" key="3"/>
<evidence type="ECO:0000269" key="4">
    <source>
    </source>
</evidence>
<evidence type="ECO:0000269" key="5">
    <source>
    </source>
</evidence>
<evidence type="ECO:0000269" key="6">
    <source>
    </source>
</evidence>
<evidence type="ECO:0000303" key="7">
    <source>
    </source>
</evidence>
<evidence type="ECO:0000303" key="8">
    <source>
    </source>
</evidence>
<evidence type="ECO:0000303" key="9">
    <source>
    </source>
</evidence>
<evidence type="ECO:0000305" key="10"/>
<evidence type="ECO:0000305" key="11">
    <source>
    </source>
</evidence>
<evidence type="ECO:0000312" key="12">
    <source>
        <dbReference type="EMBL" id="BAC98004.1"/>
    </source>
</evidence>
<evidence type="ECO:0000312" key="13">
    <source>
        <dbReference type="MGI" id="MGI:1332240"/>
    </source>
</evidence>
<evidence type="ECO:0007744" key="14">
    <source>
    </source>
</evidence>
<dbReference type="EC" id="1.16.3.1" evidence="4"/>
<dbReference type="EMBL" id="AF082567">
    <property type="protein sequence ID" value="AAD16035.1"/>
    <property type="molecule type" value="mRNA"/>
</dbReference>
<dbReference type="EMBL" id="AK129194">
    <property type="protein sequence ID" value="BAC98004.1"/>
    <property type="status" value="ALT_INIT"/>
    <property type="molecule type" value="mRNA"/>
</dbReference>
<dbReference type="EMBL" id="AL732365">
    <property type="status" value="NOT_ANNOTATED_CDS"/>
    <property type="molecule type" value="Genomic_DNA"/>
</dbReference>
<dbReference type="EMBL" id="CH466564">
    <property type="protein sequence ID" value="EDL14216.1"/>
    <property type="molecule type" value="Genomic_DNA"/>
</dbReference>
<dbReference type="EMBL" id="BC048237">
    <property type="protein sequence ID" value="AAH48237.1"/>
    <property type="molecule type" value="mRNA"/>
</dbReference>
<dbReference type="EMBL" id="BC054442">
    <property type="protein sequence ID" value="AAH54442.1"/>
    <property type="molecule type" value="mRNA"/>
</dbReference>
<dbReference type="EMBL" id="AK081330">
    <property type="protein sequence ID" value="BAC38197.1"/>
    <property type="molecule type" value="mRNA"/>
</dbReference>
<dbReference type="CCDS" id="CCDS30289.1">
    <molecule id="Q9Z0Z4-1"/>
</dbReference>
<dbReference type="RefSeq" id="NP_001153099.1">
    <molecule id="Q9Z0Z4-1"/>
    <property type="nucleotide sequence ID" value="NM_001159627.1"/>
</dbReference>
<dbReference type="RefSeq" id="NP_001153100.1">
    <molecule id="Q9Z0Z4-2"/>
    <property type="nucleotide sequence ID" value="NM_001159628.1"/>
</dbReference>
<dbReference type="RefSeq" id="NP_034547.2">
    <molecule id="Q9Z0Z4-1"/>
    <property type="nucleotide sequence ID" value="NM_010417.2"/>
</dbReference>
<dbReference type="RefSeq" id="NP_851790.1">
    <property type="nucleotide sequence ID" value="NM_181273.4"/>
</dbReference>
<dbReference type="SMR" id="Q9Z0Z4"/>
<dbReference type="BioGRID" id="200273">
    <property type="interactions" value="1"/>
</dbReference>
<dbReference type="FunCoup" id="Q9Z0Z4">
    <property type="interactions" value="128"/>
</dbReference>
<dbReference type="STRING" id="10090.ENSMUSP00000033553"/>
<dbReference type="GlyCosmos" id="Q9Z0Z4">
    <property type="glycosylation" value="8 sites, No reported glycans"/>
</dbReference>
<dbReference type="GlyGen" id="Q9Z0Z4">
    <property type="glycosylation" value="8 sites, 4 N-linked glycans (4 sites)"/>
</dbReference>
<dbReference type="iPTMnet" id="Q9Z0Z4"/>
<dbReference type="PhosphoSitePlus" id="Q9Z0Z4"/>
<dbReference type="jPOST" id="Q9Z0Z4"/>
<dbReference type="PaxDb" id="10090-ENSMUSP00000033553"/>
<dbReference type="PeptideAtlas" id="Q9Z0Z4"/>
<dbReference type="ProteomicsDB" id="269698">
    <molecule id="Q9Z0Z4-1"/>
</dbReference>
<dbReference type="ProteomicsDB" id="269699">
    <molecule id="Q9Z0Z4-2"/>
</dbReference>
<dbReference type="Antibodypedia" id="13137">
    <property type="antibodies" value="154 antibodies from 23 providers"/>
</dbReference>
<dbReference type="DNASU" id="15203"/>
<dbReference type="Ensembl" id="ENSMUST00000033553.14">
    <molecule id="Q9Z0Z4-1"/>
    <property type="protein sequence ID" value="ENSMUSP00000033553.8"/>
    <property type="gene ID" value="ENSMUSG00000031209.15"/>
</dbReference>
<dbReference type="Ensembl" id="ENSMUST00000113838.8">
    <molecule id="Q9Z0Z4-1"/>
    <property type="protein sequence ID" value="ENSMUSP00000109469.2"/>
    <property type="gene ID" value="ENSMUSG00000031209.15"/>
</dbReference>
<dbReference type="GeneID" id="15203"/>
<dbReference type="KEGG" id="mmu:15203"/>
<dbReference type="UCSC" id="uc009tuk.2">
    <molecule id="Q9Z0Z4-1"/>
    <property type="organism name" value="mouse"/>
</dbReference>
<dbReference type="UCSC" id="uc009tul.2">
    <molecule id="Q9Z0Z4-2"/>
    <property type="organism name" value="mouse"/>
</dbReference>
<dbReference type="AGR" id="MGI:1332240"/>
<dbReference type="CTD" id="9843"/>
<dbReference type="MGI" id="MGI:1332240">
    <property type="gene designation" value="Heph"/>
</dbReference>
<dbReference type="VEuPathDB" id="HostDB:ENSMUSG00000031209"/>
<dbReference type="eggNOG" id="KOG1263">
    <property type="taxonomic scope" value="Eukaryota"/>
</dbReference>
<dbReference type="GeneTree" id="ENSGT00940000158517"/>
<dbReference type="HOGENOM" id="CLU_005569_0_0_1"/>
<dbReference type="InParanoid" id="Q9Z0Z4"/>
<dbReference type="OMA" id="YCQEGSH"/>
<dbReference type="OrthoDB" id="2121828at2759"/>
<dbReference type="PhylomeDB" id="Q9Z0Z4"/>
<dbReference type="TreeFam" id="TF329807"/>
<dbReference type="Reactome" id="R-MMU-425410">
    <property type="pathway name" value="Metal ion SLC transporters"/>
</dbReference>
<dbReference type="Reactome" id="R-MMU-917937">
    <property type="pathway name" value="Iron uptake and transport"/>
</dbReference>
<dbReference type="BioGRID-ORCS" id="15203">
    <property type="hits" value="1 hit in 78 CRISPR screens"/>
</dbReference>
<dbReference type="ChiTaRS" id="Heph">
    <property type="organism name" value="mouse"/>
</dbReference>
<dbReference type="PRO" id="PR:Q9Z0Z4"/>
<dbReference type="Proteomes" id="UP000000589">
    <property type="component" value="Chromosome X"/>
</dbReference>
<dbReference type="RNAct" id="Q9Z0Z4">
    <property type="molecule type" value="protein"/>
</dbReference>
<dbReference type="Bgee" id="ENSMUSG00000031209">
    <property type="expression patterns" value="Expressed in ileum and 218 other cell types or tissues"/>
</dbReference>
<dbReference type="ExpressionAtlas" id="Q9Z0Z4">
    <property type="expression patterns" value="baseline and differential"/>
</dbReference>
<dbReference type="GO" id="GO:0016323">
    <property type="term" value="C:basolateral plasma membrane"/>
    <property type="evidence" value="ECO:0000250"/>
    <property type="project" value="UniProtKB"/>
</dbReference>
<dbReference type="GO" id="GO:0048471">
    <property type="term" value="C:perinuclear region of cytoplasm"/>
    <property type="evidence" value="ECO:0007669"/>
    <property type="project" value="Ensembl"/>
</dbReference>
<dbReference type="GO" id="GO:0005507">
    <property type="term" value="F:copper ion binding"/>
    <property type="evidence" value="ECO:0007669"/>
    <property type="project" value="InterPro"/>
</dbReference>
<dbReference type="GO" id="GO:0004322">
    <property type="term" value="F:ferroxidase activity"/>
    <property type="evidence" value="ECO:0000314"/>
    <property type="project" value="UniProtKB"/>
</dbReference>
<dbReference type="GO" id="GO:0160179">
    <property type="term" value="P:intestinal iron absorption"/>
    <property type="evidence" value="ECO:0000315"/>
    <property type="project" value="UniProtKB"/>
</dbReference>
<dbReference type="GO" id="GO:0006826">
    <property type="term" value="P:iron ion transport"/>
    <property type="evidence" value="ECO:0000304"/>
    <property type="project" value="MGI"/>
</dbReference>
<dbReference type="GO" id="GO:0060586">
    <property type="term" value="P:multicellular organismal-level iron ion homeostasis"/>
    <property type="evidence" value="ECO:0000315"/>
    <property type="project" value="UniProtKB"/>
</dbReference>
<dbReference type="GO" id="GO:1904040">
    <property type="term" value="P:positive regulation of iron export across plasma membrane"/>
    <property type="evidence" value="ECO:0000314"/>
    <property type="project" value="UniProtKB"/>
</dbReference>
<dbReference type="CDD" id="cd04222">
    <property type="entry name" value="CuRO_1_ceruloplasmin"/>
    <property type="match status" value="1"/>
</dbReference>
<dbReference type="CDD" id="cd11021">
    <property type="entry name" value="CuRO_2_ceruloplasmin"/>
    <property type="match status" value="1"/>
</dbReference>
<dbReference type="CDD" id="cd04224">
    <property type="entry name" value="CuRO_3_ceruloplasmin"/>
    <property type="match status" value="1"/>
</dbReference>
<dbReference type="CDD" id="cd04225">
    <property type="entry name" value="CuRO_5_ceruloplasmin"/>
    <property type="match status" value="1"/>
</dbReference>
<dbReference type="FunFam" id="2.60.40.420:FF:000009">
    <property type="entry name" value="Ceruloplasmin"/>
    <property type="match status" value="1"/>
</dbReference>
<dbReference type="FunFam" id="2.60.40.420:FF:000015">
    <property type="entry name" value="Ceruloplasmin"/>
    <property type="match status" value="1"/>
</dbReference>
<dbReference type="FunFam" id="2.60.40.420:FF:000075">
    <property type="entry name" value="hephaestin isoform X2"/>
    <property type="match status" value="1"/>
</dbReference>
<dbReference type="FunFam" id="2.60.40.420:FF:000002">
    <property type="entry name" value="Hephaestin like 1"/>
    <property type="match status" value="1"/>
</dbReference>
<dbReference type="Gene3D" id="2.60.40.420">
    <property type="entry name" value="Cupredoxins - blue copper proteins"/>
    <property type="match status" value="3"/>
</dbReference>
<dbReference type="InterPro" id="IPR048236">
    <property type="entry name" value="Ceruloplasmin-like_CuRO_5"/>
</dbReference>
<dbReference type="InterPro" id="IPR011707">
    <property type="entry name" value="Cu-oxidase-like_N"/>
</dbReference>
<dbReference type="InterPro" id="IPR011706">
    <property type="entry name" value="Cu-oxidase_C"/>
</dbReference>
<dbReference type="InterPro" id="IPR045087">
    <property type="entry name" value="Cu-oxidase_fam"/>
</dbReference>
<dbReference type="InterPro" id="IPR033138">
    <property type="entry name" value="Cu_oxidase_CS"/>
</dbReference>
<dbReference type="InterPro" id="IPR002355">
    <property type="entry name" value="Cu_oxidase_Cu_BS"/>
</dbReference>
<dbReference type="InterPro" id="IPR008972">
    <property type="entry name" value="Cupredoxin"/>
</dbReference>
<dbReference type="InterPro" id="IPR024715">
    <property type="entry name" value="Factor_5/8-like"/>
</dbReference>
<dbReference type="PANTHER" id="PTHR11709:SF221">
    <property type="entry name" value="HEPHAESTIN"/>
    <property type="match status" value="1"/>
</dbReference>
<dbReference type="PANTHER" id="PTHR11709">
    <property type="entry name" value="MULTI-COPPER OXIDASE"/>
    <property type="match status" value="1"/>
</dbReference>
<dbReference type="Pfam" id="PF07731">
    <property type="entry name" value="Cu-oxidase_2"/>
    <property type="match status" value="1"/>
</dbReference>
<dbReference type="Pfam" id="PF07732">
    <property type="entry name" value="Cu-oxidase_3"/>
    <property type="match status" value="3"/>
</dbReference>
<dbReference type="PIRSF" id="PIRSF000354">
    <property type="entry name" value="Factors_V_VIII"/>
    <property type="match status" value="1"/>
</dbReference>
<dbReference type="SUPFAM" id="SSF49503">
    <property type="entry name" value="Cupredoxins"/>
    <property type="match status" value="6"/>
</dbReference>
<dbReference type="PROSITE" id="PS00079">
    <property type="entry name" value="MULTICOPPER_OXIDASE1"/>
    <property type="match status" value="3"/>
</dbReference>
<dbReference type="PROSITE" id="PS00080">
    <property type="entry name" value="MULTICOPPER_OXIDASE2"/>
    <property type="match status" value="1"/>
</dbReference>
<gene>
    <name evidence="13" type="primary">Heph</name>
    <name evidence="12" type="synonym">Kiaa0698</name>
</gene>
<feature type="signal peptide" evidence="3">
    <location>
        <begin position="1"/>
        <end position="18"/>
    </location>
</feature>
<feature type="chain" id="PRO_0000002916" description="Hephaestin">
    <location>
        <begin position="19"/>
        <end position="1157"/>
    </location>
</feature>
<feature type="topological domain" description="Extracellular" evidence="3">
    <location>
        <begin position="19"/>
        <end position="1109"/>
    </location>
</feature>
<feature type="transmembrane region" description="Helical" evidence="3">
    <location>
        <begin position="1110"/>
        <end position="1130"/>
    </location>
</feature>
<feature type="topological domain" description="Cytoplasmic" evidence="3">
    <location>
        <begin position="1131"/>
        <end position="1157"/>
    </location>
</feature>
<feature type="domain" description="Plastocyanin-like 1" evidence="1">
    <location>
        <begin position="24"/>
        <end position="206"/>
    </location>
</feature>
<feature type="domain" description="Plastocyanin-like 2" evidence="1">
    <location>
        <begin position="218"/>
        <end position="366"/>
    </location>
</feature>
<feature type="domain" description="Plastocyanin-like 3" evidence="1">
    <location>
        <begin position="370"/>
        <end position="559"/>
    </location>
</feature>
<feature type="domain" description="Plastocyanin-like 4" evidence="1">
    <location>
        <begin position="569"/>
        <end position="717"/>
    </location>
</feature>
<feature type="domain" description="Plastocyanin-like 5" evidence="1">
    <location>
        <begin position="730"/>
        <end position="902"/>
    </location>
</feature>
<feature type="domain" description="Plastocyanin-like 6" evidence="1">
    <location>
        <begin position="910"/>
        <end position="1066"/>
    </location>
</feature>
<feature type="binding site" evidence="1">
    <location>
        <position position="70"/>
    </location>
    <ligand>
        <name>Na(+)</name>
        <dbReference type="ChEBI" id="CHEBI:29101"/>
        <label>1</label>
    </ligand>
</feature>
<feature type="binding site" evidence="1">
    <location>
        <position position="73"/>
    </location>
    <ligand>
        <name>Na(+)</name>
        <dbReference type="ChEBI" id="CHEBI:29101"/>
        <label>1</label>
    </ligand>
</feature>
<feature type="binding site" description="type 2 copper site" evidence="1">
    <location>
        <position position="126"/>
    </location>
    <ligand>
        <name>Cu(2+)</name>
        <dbReference type="ChEBI" id="CHEBI:29036"/>
        <label>1</label>
    </ligand>
</feature>
<feature type="binding site" evidence="1">
    <location>
        <position position="126"/>
    </location>
    <ligand>
        <name>O2</name>
        <dbReference type="ChEBI" id="CHEBI:15379"/>
    </ligand>
</feature>
<feature type="binding site" description="type 3 copper site" evidence="1">
    <location>
        <position position="128"/>
    </location>
    <ligand>
        <name>Cu(2+)</name>
        <dbReference type="ChEBI" id="CHEBI:29036"/>
        <label>2</label>
    </ligand>
</feature>
<feature type="binding site" evidence="1">
    <location>
        <position position="134"/>
    </location>
    <ligand>
        <name>Ca(2+)</name>
        <dbReference type="ChEBI" id="CHEBI:29108"/>
    </ligand>
</feature>
<feature type="binding site" evidence="1">
    <location>
        <position position="152"/>
    </location>
    <ligand>
        <name>Ca(2+)</name>
        <dbReference type="ChEBI" id="CHEBI:29108"/>
    </ligand>
</feature>
<feature type="binding site" evidence="1">
    <location>
        <position position="153"/>
    </location>
    <ligand>
        <name>Ca(2+)</name>
        <dbReference type="ChEBI" id="CHEBI:29108"/>
    </ligand>
</feature>
<feature type="binding site" description="type 3 copper site" evidence="1">
    <location>
        <position position="186"/>
    </location>
    <ligand>
        <name>Cu(2+)</name>
        <dbReference type="ChEBI" id="CHEBI:29036"/>
        <label>2</label>
    </ligand>
</feature>
<feature type="binding site" evidence="1">
    <location>
        <position position="186"/>
    </location>
    <ligand>
        <name>O2</name>
        <dbReference type="ChEBI" id="CHEBI:15379"/>
    </ligand>
</feature>
<feature type="binding site" description="type 3 copper site" evidence="1">
    <location>
        <position position="188"/>
    </location>
    <ligand>
        <name>Cu(2+)</name>
        <dbReference type="ChEBI" id="CHEBI:29036"/>
        <label>3</label>
    </ligand>
</feature>
<feature type="binding site" evidence="1">
    <location>
        <position position="265"/>
    </location>
    <ligand>
        <name>Na(+)</name>
        <dbReference type="ChEBI" id="CHEBI:29101"/>
        <label>1</label>
    </ligand>
</feature>
<feature type="binding site" description="type 1 copper site" evidence="1">
    <location>
        <position position="304"/>
    </location>
    <ligand>
        <name>Cu(2+)</name>
        <dbReference type="ChEBI" id="CHEBI:29036"/>
        <label>4</label>
    </ligand>
</feature>
<feature type="binding site" description="type 1 copper site" evidence="1">
    <location>
        <position position="347"/>
    </location>
    <ligand>
        <name>Cu(2+)</name>
        <dbReference type="ChEBI" id="CHEBI:29036"/>
        <label>4</label>
    </ligand>
</feature>
<feature type="binding site" description="type 1 copper site" evidence="1">
    <location>
        <position position="352"/>
    </location>
    <ligand>
        <name>Cu(2+)</name>
        <dbReference type="ChEBI" id="CHEBI:29036"/>
        <label>4</label>
    </ligand>
</feature>
<feature type="binding site" evidence="1">
    <location>
        <position position="416"/>
    </location>
    <ligand>
        <name>Na(+)</name>
        <dbReference type="ChEBI" id="CHEBI:29101"/>
        <label>2</label>
    </ligand>
</feature>
<feature type="binding site" evidence="1">
    <location>
        <position position="425"/>
    </location>
    <ligand>
        <name>Na(+)</name>
        <dbReference type="ChEBI" id="CHEBI:29101"/>
        <label>2</label>
    </ligand>
</feature>
<feature type="binding site" evidence="1">
    <location>
        <position position="428"/>
    </location>
    <ligand>
        <name>Na(+)</name>
        <dbReference type="ChEBI" id="CHEBI:29101"/>
        <label>2</label>
    </ligand>
</feature>
<feature type="binding site" evidence="1">
    <location>
        <position position="616"/>
    </location>
    <ligand>
        <name>Na(+)</name>
        <dbReference type="ChEBI" id="CHEBI:29101"/>
        <label>2</label>
    </ligand>
</feature>
<feature type="binding site" description="type 1 copper site" evidence="1">
    <location>
        <position position="655"/>
    </location>
    <ligand>
        <name>Cu(2+)</name>
        <dbReference type="ChEBI" id="CHEBI:29036"/>
        <label>5</label>
    </ligand>
</feature>
<feature type="binding site" description="type 1 copper site" evidence="1">
    <location>
        <position position="698"/>
    </location>
    <ligand>
        <name>Cu(2+)</name>
        <dbReference type="ChEBI" id="CHEBI:29036"/>
        <label>5</label>
    </ligand>
</feature>
<feature type="binding site" description="type 1 copper site" evidence="1">
    <location>
        <position position="703"/>
    </location>
    <ligand>
        <name>Cu(2+)</name>
        <dbReference type="ChEBI" id="CHEBI:29036"/>
        <label>5</label>
    </ligand>
</feature>
<feature type="binding site" description="type 1 copper site" evidence="1">
    <location>
        <position position="708"/>
    </location>
    <ligand>
        <name>Cu(2+)</name>
        <dbReference type="ChEBI" id="CHEBI:29036"/>
        <label>5</label>
    </ligand>
</feature>
<feature type="binding site" evidence="1">
    <location>
        <position position="768"/>
    </location>
    <ligand>
        <name>Na(+)</name>
        <dbReference type="ChEBI" id="CHEBI:29101"/>
        <label>3</label>
    </ligand>
</feature>
<feature type="binding site" evidence="1">
    <location>
        <position position="777"/>
    </location>
    <ligand>
        <name>Na(+)</name>
        <dbReference type="ChEBI" id="CHEBI:29101"/>
        <label>3</label>
    </ligand>
</feature>
<feature type="binding site" description="type 1 copper site" evidence="1">
    <location>
        <position position="999"/>
    </location>
    <ligand>
        <name>Cu(2+)</name>
        <dbReference type="ChEBI" id="CHEBI:29036"/>
        <label>6</label>
    </ligand>
</feature>
<feature type="binding site" description="type 2 copper site" evidence="1">
    <location>
        <position position="1002"/>
    </location>
    <ligand>
        <name>Cu(2+)</name>
        <dbReference type="ChEBI" id="CHEBI:29036"/>
        <label>1</label>
    </ligand>
</feature>
<feature type="binding site" evidence="1">
    <location>
        <position position="1002"/>
    </location>
    <ligand>
        <name>O2</name>
        <dbReference type="ChEBI" id="CHEBI:15379"/>
    </ligand>
</feature>
<feature type="binding site" description="type 3 copper site" evidence="1">
    <location>
        <position position="1004"/>
    </location>
    <ligand>
        <name>Cu(2+)</name>
        <dbReference type="ChEBI" id="CHEBI:29036"/>
        <label>3</label>
    </ligand>
</feature>
<feature type="binding site" evidence="1">
    <location>
        <position position="1004"/>
    </location>
    <ligand>
        <name>O2</name>
        <dbReference type="ChEBI" id="CHEBI:15379"/>
    </ligand>
</feature>
<feature type="binding site" description="type 3 copper site" evidence="1">
    <location>
        <position position="1044"/>
    </location>
    <ligand>
        <name>Cu(2+)</name>
        <dbReference type="ChEBI" id="CHEBI:29036"/>
        <label>3</label>
    </ligand>
</feature>
<feature type="binding site" description="type 1 copper site" evidence="1">
    <location>
        <position position="1045"/>
    </location>
    <ligand>
        <name>Cu(2+)</name>
        <dbReference type="ChEBI" id="CHEBI:29036"/>
        <label>6</label>
    </ligand>
</feature>
<feature type="binding site" description="type 3 copper site" evidence="1">
    <location>
        <position position="1046"/>
    </location>
    <ligand>
        <name>Cu(2+)</name>
        <dbReference type="ChEBI" id="CHEBI:29036"/>
        <label>2</label>
    </ligand>
</feature>
<feature type="binding site" evidence="1">
    <location>
        <position position="1046"/>
    </location>
    <ligand>
        <name>O2</name>
        <dbReference type="ChEBI" id="CHEBI:15379"/>
    </ligand>
</feature>
<feature type="binding site" description="type 1 copper site" evidence="1">
    <location>
        <position position="1050"/>
    </location>
    <ligand>
        <name>Cu(2+)</name>
        <dbReference type="ChEBI" id="CHEBI:29036"/>
        <label>6</label>
    </ligand>
</feature>
<feature type="binding site" description="type 1 copper site" evidence="1">
    <location>
        <position position="1055"/>
    </location>
    <ligand>
        <name>Cu(2+)</name>
        <dbReference type="ChEBI" id="CHEBI:29036"/>
        <label>6</label>
    </ligand>
</feature>
<feature type="modified residue" description="Phosphoserine" evidence="14">
    <location>
        <position position="1144"/>
    </location>
</feature>
<feature type="modified residue" description="Phosphoserine" evidence="14">
    <location>
        <position position="1149"/>
    </location>
</feature>
<feature type="modified residue" description="Phosphoserine" evidence="14">
    <location>
        <position position="1154"/>
    </location>
</feature>
<feature type="glycosylation site" description="N-linked (GlcNAc...) asparagine" evidence="3">
    <location>
        <position position="49"/>
    </location>
</feature>
<feature type="glycosylation site" description="N-linked (GlcNAc...) asparagine" evidence="3">
    <location>
        <position position="54"/>
    </location>
</feature>
<feature type="glycosylation site" description="N-linked (GlcNAc...) asparagine" evidence="3">
    <location>
        <position position="164"/>
    </location>
</feature>
<feature type="glycosylation site" description="N-linked (GlcNAc...) asparagine" evidence="3">
    <location>
        <position position="236"/>
    </location>
</feature>
<feature type="glycosylation site" description="N-linked (GlcNAc...) asparagine" evidence="3">
    <location>
        <position position="587"/>
    </location>
</feature>
<feature type="glycosylation site" description="N-linked (GlcNAc...) asparagine" evidence="3">
    <location>
        <position position="713"/>
    </location>
</feature>
<feature type="glycosylation site" description="N-linked (GlcNAc...) asparagine" evidence="3">
    <location>
        <position position="757"/>
    </location>
</feature>
<feature type="glycosylation site" description="N-linked (GlcNAc...) asparagine" evidence="3">
    <location>
        <position position="930"/>
    </location>
</feature>
<feature type="disulfide bond" evidence="3">
    <location>
        <begin position="180"/>
        <end position="206"/>
    </location>
</feature>
<feature type="disulfide bond" evidence="3">
    <location>
        <begin position="285"/>
        <end position="366"/>
    </location>
</feature>
<feature type="disulfide bond" evidence="3">
    <location>
        <begin position="533"/>
        <end position="559"/>
    </location>
</feature>
<feature type="disulfide bond" evidence="3">
    <location>
        <begin position="636"/>
        <end position="717"/>
    </location>
</feature>
<feature type="disulfide bond" evidence="3">
    <location>
        <begin position="876"/>
        <end position="902"/>
    </location>
</feature>
<feature type="splice variant" id="VSP_011628" description="In isoform 2." evidence="8">
    <location>
        <position position="1081"/>
    </location>
</feature>
<feature type="sequence conflict" description="In Ref. 6; BAC38197." evidence="10" ref="6">
    <location>
        <begin position="501"/>
        <end position="542"/>
    </location>
</feature>
<feature type="sequence conflict" description="In Ref. 2; BAC98004 and 5; AAH48237/AAH54442." evidence="10" ref="2 5">
    <original>N</original>
    <variation>S</variation>
    <location>
        <position position="593"/>
    </location>
</feature>
<feature type="sequence conflict" description="In Ref. 6; BAC38197." evidence="10" ref="6">
    <original>VLTYQWNIPERSGPGPSDSACVSWIYYSAVDPIK</original>
    <variation>LEHLMKRQRLYNPFTLVFWFIPFNILHSWAGQVT</variation>
    <location>
        <begin position="856"/>
        <end position="889"/>
    </location>
</feature>
<feature type="sequence conflict" description="In Ref. 1; AAD16035." evidence="10" ref="1">
    <original>F</original>
    <variation>Y</variation>
    <location>
        <position position="1068"/>
    </location>
</feature>
<accession>Q9Z0Z4</accession>
<accession>A2AI63</accession>
<accession>Q6ZQ65</accession>
<accession>Q80Y80</accession>
<accession>Q8C4S2</accession>
<comment type="function">
    <text evidence="4 5 6">Plasma membrane ferroxidase that mediates the extracellular conversion of ferrous/Fe(2+) iron into its ferric/Fe(3+) form (PubMed:14751926). Couples ferroportin which specifically exports ferrous/Fe(2+) iron from cells to transferrin that only binds and shuttles extracellular ferric/Fe(3+) iron throughout the body. By helping iron transfer from cells to blood mainly contributes to dietary iron absorption by the intestinal epithelium and more generally regulates iron levels in the body (PubMed:14751926, PubMed:30647129, PubMed:9988272).</text>
</comment>
<comment type="catalytic activity">
    <reaction evidence="4">
        <text>4 Fe(2+) + O2 + 4 H(+) = 4 Fe(3+) + 2 H2O</text>
        <dbReference type="Rhea" id="RHEA:11148"/>
        <dbReference type="ChEBI" id="CHEBI:15377"/>
        <dbReference type="ChEBI" id="CHEBI:15378"/>
        <dbReference type="ChEBI" id="CHEBI:15379"/>
        <dbReference type="ChEBI" id="CHEBI:29033"/>
        <dbReference type="ChEBI" id="CHEBI:29034"/>
        <dbReference type="EC" id="1.16.3.1"/>
    </reaction>
    <physiologicalReaction direction="left-to-right" evidence="11">
        <dbReference type="Rhea" id="RHEA:11149"/>
    </physiologicalReaction>
</comment>
<comment type="cofactor">
    <cofactor evidence="1">
        <name>Cu cation</name>
        <dbReference type="ChEBI" id="CHEBI:23378"/>
    </cofactor>
    <text evidence="1">Binds 6 Cu cations per monomer.</text>
</comment>
<comment type="subunit">
    <text evidence="5">Part of a complex composed of SLC40A1/ferroportin, TF/transferrin and HEPH/hephaestin that transfers iron from cells to transferrin.</text>
</comment>
<comment type="subcellular location">
    <subcellularLocation>
        <location evidence="2">Basolateral cell membrane</location>
        <topology evidence="3">Single-pass type I membrane protein</topology>
    </subcellularLocation>
</comment>
<comment type="alternative products">
    <event type="alternative splicing"/>
    <isoform>
        <id>Q9Z0Z4-1</id>
        <name>1</name>
        <sequence type="displayed"/>
    </isoform>
    <isoform>
        <id>Q9Z0Z4-2</id>
        <name>2</name>
        <sequence type="described" ref="VSP_011628"/>
    </isoform>
</comment>
<comment type="disease">
    <text evidence="6">Defects in Heph are a cause of the sex-linked anemia (sla) that is characterized by moderate to severe microcytic hypochronic anemia with iron accumulation in the intestinal epithelium.</text>
</comment>
<comment type="similarity">
    <text evidence="10">Belongs to the multicopper oxidase family.</text>
</comment>
<comment type="sequence caution" evidence="10">
    <conflict type="erroneous initiation">
        <sequence resource="EMBL-CDS" id="BAC98004"/>
    </conflict>
</comment>
<reference key="1">
    <citation type="journal article" date="1999" name="Nat. Genet.">
        <title>Hephaestin, a ceruloplasmin homologue implicated in intestinal iron transport, is defective in the sla mouse.</title>
        <authorList>
            <person name="Vulpe C.D."/>
            <person name="Kuo Y.M."/>
            <person name="Murphy T.L."/>
            <person name="Cowley L."/>
            <person name="Askwith C."/>
            <person name="Libina N."/>
            <person name="Gitschier J."/>
            <person name="Anderson G.J."/>
        </authorList>
    </citation>
    <scope>NUCLEOTIDE SEQUENCE [MRNA] (ISOFORM 1)</scope>
    <scope>FUNCTION</scope>
    <scope>DISEASE</scope>
    <source>
        <strain>C57BL/6J</strain>
    </source>
</reference>
<reference key="2">
    <citation type="journal article" date="2003" name="DNA Res.">
        <title>Prediction of the coding sequences of mouse homologues of KIAA gene: III. The complete nucleotide sequences of 500 mouse KIAA-homologous cDNAs identified by screening of terminal sequences of cDNA clones randomly sampled from size-fractionated libraries.</title>
        <authorList>
            <person name="Okazaki N."/>
            <person name="Kikuno R."/>
            <person name="Ohara R."/>
            <person name="Inamoto S."/>
            <person name="Koseki H."/>
            <person name="Hiraoka S."/>
            <person name="Saga Y."/>
            <person name="Nagase T."/>
            <person name="Ohara O."/>
            <person name="Koga H."/>
        </authorList>
    </citation>
    <scope>NUCLEOTIDE SEQUENCE [LARGE SCALE MRNA] (ISOFORM 1)</scope>
    <source>
        <tissue>Embryonic tail</tissue>
    </source>
</reference>
<reference key="3">
    <citation type="journal article" date="2009" name="PLoS Biol.">
        <title>Lineage-specific biology revealed by a finished genome assembly of the mouse.</title>
        <authorList>
            <person name="Church D.M."/>
            <person name="Goodstadt L."/>
            <person name="Hillier L.W."/>
            <person name="Zody M.C."/>
            <person name="Goldstein S."/>
            <person name="She X."/>
            <person name="Bult C.J."/>
            <person name="Agarwala R."/>
            <person name="Cherry J.L."/>
            <person name="DiCuccio M."/>
            <person name="Hlavina W."/>
            <person name="Kapustin Y."/>
            <person name="Meric P."/>
            <person name="Maglott D."/>
            <person name="Birtle Z."/>
            <person name="Marques A.C."/>
            <person name="Graves T."/>
            <person name="Zhou S."/>
            <person name="Teague B."/>
            <person name="Potamousis K."/>
            <person name="Churas C."/>
            <person name="Place M."/>
            <person name="Herschleb J."/>
            <person name="Runnheim R."/>
            <person name="Forrest D."/>
            <person name="Amos-Landgraf J."/>
            <person name="Schwartz D.C."/>
            <person name="Cheng Z."/>
            <person name="Lindblad-Toh K."/>
            <person name="Eichler E.E."/>
            <person name="Ponting C.P."/>
        </authorList>
    </citation>
    <scope>NUCLEOTIDE SEQUENCE [LARGE SCALE GENOMIC DNA]</scope>
    <source>
        <strain>C57BL/6J</strain>
    </source>
</reference>
<reference key="4">
    <citation type="submission" date="2005-09" db="EMBL/GenBank/DDBJ databases">
        <authorList>
            <person name="Mural R.J."/>
            <person name="Adams M.D."/>
            <person name="Myers E.W."/>
            <person name="Smith H.O."/>
            <person name="Venter J.C."/>
        </authorList>
    </citation>
    <scope>NUCLEOTIDE SEQUENCE [LARGE SCALE GENOMIC DNA]</scope>
</reference>
<reference key="5">
    <citation type="journal article" date="2004" name="Genome Res.">
        <title>The status, quality, and expansion of the NIH full-length cDNA project: the Mammalian Gene Collection (MGC).</title>
        <authorList>
            <consortium name="The MGC Project Team"/>
        </authorList>
    </citation>
    <scope>NUCLEOTIDE SEQUENCE [LARGE SCALE MRNA] (ISOFORM 2)</scope>
    <source>
        <strain>FVB/N</strain>
        <tissue>Colon</tissue>
    </source>
</reference>
<reference key="6">
    <citation type="journal article" date="2005" name="Science">
        <title>The transcriptional landscape of the mammalian genome.</title>
        <authorList>
            <person name="Carninci P."/>
            <person name="Kasukawa T."/>
            <person name="Katayama S."/>
            <person name="Gough J."/>
            <person name="Frith M.C."/>
            <person name="Maeda N."/>
            <person name="Oyama R."/>
            <person name="Ravasi T."/>
            <person name="Lenhard B."/>
            <person name="Wells C."/>
            <person name="Kodzius R."/>
            <person name="Shimokawa K."/>
            <person name="Bajic V.B."/>
            <person name="Brenner S.E."/>
            <person name="Batalov S."/>
            <person name="Forrest A.R."/>
            <person name="Zavolan M."/>
            <person name="Davis M.J."/>
            <person name="Wilming L.G."/>
            <person name="Aidinis V."/>
            <person name="Allen J.E."/>
            <person name="Ambesi-Impiombato A."/>
            <person name="Apweiler R."/>
            <person name="Aturaliya R.N."/>
            <person name="Bailey T.L."/>
            <person name="Bansal M."/>
            <person name="Baxter L."/>
            <person name="Beisel K.W."/>
            <person name="Bersano T."/>
            <person name="Bono H."/>
            <person name="Chalk A.M."/>
            <person name="Chiu K.P."/>
            <person name="Choudhary V."/>
            <person name="Christoffels A."/>
            <person name="Clutterbuck D.R."/>
            <person name="Crowe M.L."/>
            <person name="Dalla E."/>
            <person name="Dalrymple B.P."/>
            <person name="de Bono B."/>
            <person name="Della Gatta G."/>
            <person name="di Bernardo D."/>
            <person name="Down T."/>
            <person name="Engstrom P."/>
            <person name="Fagiolini M."/>
            <person name="Faulkner G."/>
            <person name="Fletcher C.F."/>
            <person name="Fukushima T."/>
            <person name="Furuno M."/>
            <person name="Futaki S."/>
            <person name="Gariboldi M."/>
            <person name="Georgii-Hemming P."/>
            <person name="Gingeras T.R."/>
            <person name="Gojobori T."/>
            <person name="Green R.E."/>
            <person name="Gustincich S."/>
            <person name="Harbers M."/>
            <person name="Hayashi Y."/>
            <person name="Hensch T.K."/>
            <person name="Hirokawa N."/>
            <person name="Hill D."/>
            <person name="Huminiecki L."/>
            <person name="Iacono M."/>
            <person name="Ikeo K."/>
            <person name="Iwama A."/>
            <person name="Ishikawa T."/>
            <person name="Jakt M."/>
            <person name="Kanapin A."/>
            <person name="Katoh M."/>
            <person name="Kawasawa Y."/>
            <person name="Kelso J."/>
            <person name="Kitamura H."/>
            <person name="Kitano H."/>
            <person name="Kollias G."/>
            <person name="Krishnan S.P."/>
            <person name="Kruger A."/>
            <person name="Kummerfeld S.K."/>
            <person name="Kurochkin I.V."/>
            <person name="Lareau L.F."/>
            <person name="Lazarevic D."/>
            <person name="Lipovich L."/>
            <person name="Liu J."/>
            <person name="Liuni S."/>
            <person name="McWilliam S."/>
            <person name="Madan Babu M."/>
            <person name="Madera M."/>
            <person name="Marchionni L."/>
            <person name="Matsuda H."/>
            <person name="Matsuzawa S."/>
            <person name="Miki H."/>
            <person name="Mignone F."/>
            <person name="Miyake S."/>
            <person name="Morris K."/>
            <person name="Mottagui-Tabar S."/>
            <person name="Mulder N."/>
            <person name="Nakano N."/>
            <person name="Nakauchi H."/>
            <person name="Ng P."/>
            <person name="Nilsson R."/>
            <person name="Nishiguchi S."/>
            <person name="Nishikawa S."/>
            <person name="Nori F."/>
            <person name="Ohara O."/>
            <person name="Okazaki Y."/>
            <person name="Orlando V."/>
            <person name="Pang K.C."/>
            <person name="Pavan W.J."/>
            <person name="Pavesi G."/>
            <person name="Pesole G."/>
            <person name="Petrovsky N."/>
            <person name="Piazza S."/>
            <person name="Reed J."/>
            <person name="Reid J.F."/>
            <person name="Ring B.Z."/>
            <person name="Ringwald M."/>
            <person name="Rost B."/>
            <person name="Ruan Y."/>
            <person name="Salzberg S.L."/>
            <person name="Sandelin A."/>
            <person name="Schneider C."/>
            <person name="Schoenbach C."/>
            <person name="Sekiguchi K."/>
            <person name="Semple C.A."/>
            <person name="Seno S."/>
            <person name="Sessa L."/>
            <person name="Sheng Y."/>
            <person name="Shibata Y."/>
            <person name="Shimada H."/>
            <person name="Shimada K."/>
            <person name="Silva D."/>
            <person name="Sinclair B."/>
            <person name="Sperling S."/>
            <person name="Stupka E."/>
            <person name="Sugiura K."/>
            <person name="Sultana R."/>
            <person name="Takenaka Y."/>
            <person name="Taki K."/>
            <person name="Tammoja K."/>
            <person name="Tan S.L."/>
            <person name="Tang S."/>
            <person name="Taylor M.S."/>
            <person name="Tegner J."/>
            <person name="Teichmann S.A."/>
            <person name="Ueda H.R."/>
            <person name="van Nimwegen E."/>
            <person name="Verardo R."/>
            <person name="Wei C.L."/>
            <person name="Yagi K."/>
            <person name="Yamanishi H."/>
            <person name="Zabarovsky E."/>
            <person name="Zhu S."/>
            <person name="Zimmer A."/>
            <person name="Hide W."/>
            <person name="Bult C."/>
            <person name="Grimmond S.M."/>
            <person name="Teasdale R.D."/>
            <person name="Liu E.T."/>
            <person name="Brusic V."/>
            <person name="Quackenbush J."/>
            <person name="Wahlestedt C."/>
            <person name="Mattick J.S."/>
            <person name="Hume D.A."/>
            <person name="Kai C."/>
            <person name="Sasaki D."/>
            <person name="Tomaru Y."/>
            <person name="Fukuda S."/>
            <person name="Kanamori-Katayama M."/>
            <person name="Suzuki M."/>
            <person name="Aoki J."/>
            <person name="Arakawa T."/>
            <person name="Iida J."/>
            <person name="Imamura K."/>
            <person name="Itoh M."/>
            <person name="Kato T."/>
            <person name="Kawaji H."/>
            <person name="Kawagashira N."/>
            <person name="Kawashima T."/>
            <person name="Kojima M."/>
            <person name="Kondo S."/>
            <person name="Konno H."/>
            <person name="Nakano K."/>
            <person name="Ninomiya N."/>
            <person name="Nishio T."/>
            <person name="Okada M."/>
            <person name="Plessy C."/>
            <person name="Shibata K."/>
            <person name="Shiraki T."/>
            <person name="Suzuki S."/>
            <person name="Tagami M."/>
            <person name="Waki K."/>
            <person name="Watahiki A."/>
            <person name="Okamura-Oho Y."/>
            <person name="Suzuki H."/>
            <person name="Kawai J."/>
            <person name="Hayashizaki Y."/>
        </authorList>
    </citation>
    <scope>NUCLEOTIDE SEQUENCE [LARGE SCALE MRNA] OF 1-889</scope>
    <source>
        <strain>C57BL/6J</strain>
        <tissue>Head</tissue>
    </source>
</reference>
<reference key="7">
    <citation type="journal article" date="2004" name="Blood">
        <title>Hephaestin is a ferroxidase that maintains partial activity in sex-linked anemia mice.</title>
        <authorList>
            <person name="Chen H."/>
            <person name="Attieh Z.K."/>
            <person name="Su T."/>
            <person name="Syed B.A."/>
            <person name="Gao H."/>
            <person name="Alaeddine R.M."/>
            <person name="Fox T.C."/>
            <person name="Usta J."/>
            <person name="Naylor C.E."/>
            <person name="Evans R.W."/>
            <person name="McKie A.T."/>
            <person name="Anderson G.J."/>
            <person name="Vulpe C.D."/>
        </authorList>
    </citation>
    <scope>FUNCTION</scope>
    <scope>CATALYTIC ACTIVITY</scope>
</reference>
<reference key="8">
    <citation type="journal article" date="2010" name="Cell">
        <title>A tissue-specific atlas of mouse protein phosphorylation and expression.</title>
        <authorList>
            <person name="Huttlin E.L."/>
            <person name="Jedrychowski M.P."/>
            <person name="Elias J.E."/>
            <person name="Goswami T."/>
            <person name="Rad R."/>
            <person name="Beausoleil S.A."/>
            <person name="Villen J."/>
            <person name="Haas W."/>
            <person name="Sowa M.E."/>
            <person name="Gygi S.P."/>
        </authorList>
    </citation>
    <scope>PHOSPHORYLATION [LARGE SCALE ANALYSIS] AT SER-1144; SER-1149 AND SER-1154</scope>
    <scope>IDENTIFICATION BY MASS SPECTROMETRY [LARGE SCALE ANALYSIS]</scope>
    <source>
        <tissue>Brain</tissue>
        <tissue>Kidney</tissue>
        <tissue>Liver</tissue>
        <tissue>Lung</tissue>
        <tissue>Spleen</tissue>
        <tissue>Testis</tissue>
    </source>
</reference>
<reference key="9">
    <citation type="journal article" date="2019" name="J. Biol. Chem.">
        <title>Fluorescence resonance energy transfer links membrane ferroportin, hephaestin but not ferroportin, amyloid precursor protein complex with iron efflux.</title>
        <authorList>
            <person name="Dlouhy A.C."/>
            <person name="Bailey D.K."/>
            <person name="Steimle B.L."/>
            <person name="Parker H.V."/>
            <person name="Kosman D.J."/>
        </authorList>
    </citation>
    <scope>FUNCTION</scope>
    <scope>SUBUNIT</scope>
</reference>
<proteinExistence type="evidence at protein level"/>
<protein>
    <recommendedName>
        <fullName evidence="9">Hephaestin</fullName>
        <shortName evidence="7">Hp</shortName>
        <ecNumber evidence="4">1.16.3.1</ecNumber>
    </recommendedName>
</protein>
<organism>
    <name type="scientific">Mus musculus</name>
    <name type="common">Mouse</name>
    <dbReference type="NCBI Taxonomy" id="10090"/>
    <lineage>
        <taxon>Eukaryota</taxon>
        <taxon>Metazoa</taxon>
        <taxon>Chordata</taxon>
        <taxon>Craniata</taxon>
        <taxon>Vertebrata</taxon>
        <taxon>Euteleostomi</taxon>
        <taxon>Mammalia</taxon>
        <taxon>Eutheria</taxon>
        <taxon>Euarchontoglires</taxon>
        <taxon>Glires</taxon>
        <taxon>Rodentia</taxon>
        <taxon>Myomorpha</taxon>
        <taxon>Muroidea</taxon>
        <taxon>Muridae</taxon>
        <taxon>Murinae</taxon>
        <taxon>Mus</taxon>
        <taxon>Mus</taxon>
    </lineage>
</organism>